<keyword id="KW-0687">Ribonucleoprotein</keyword>
<keyword id="KW-0689">Ribosomal protein</keyword>
<protein>
    <recommendedName>
        <fullName evidence="1">Small ribosomal subunit protein uS10</fullName>
    </recommendedName>
    <alternativeName>
        <fullName evidence="2">30S ribosomal protein S10</fullName>
    </alternativeName>
</protein>
<feature type="chain" id="PRO_1000015054" description="Small ribosomal subunit protein uS10">
    <location>
        <begin position="1"/>
        <end position="102"/>
    </location>
</feature>
<accession>A6VGV7</accession>
<gene>
    <name evidence="1" type="primary">rps10</name>
    <name type="ordered locus">MmarC7_0616</name>
</gene>
<reference key="1">
    <citation type="submission" date="2007-06" db="EMBL/GenBank/DDBJ databases">
        <title>Complete sequence of Methanococcus maripaludis C7.</title>
        <authorList>
            <consortium name="US DOE Joint Genome Institute"/>
            <person name="Copeland A."/>
            <person name="Lucas S."/>
            <person name="Lapidus A."/>
            <person name="Barry K."/>
            <person name="Glavina del Rio T."/>
            <person name="Dalin E."/>
            <person name="Tice H."/>
            <person name="Pitluck S."/>
            <person name="Clum A."/>
            <person name="Schmutz J."/>
            <person name="Larimer F."/>
            <person name="Land M."/>
            <person name="Hauser L."/>
            <person name="Kyrpides N."/>
            <person name="Anderson I."/>
            <person name="Sieprawska-Lupa M."/>
            <person name="Whitman W.B."/>
            <person name="Richardson P."/>
        </authorList>
    </citation>
    <scope>NUCLEOTIDE SEQUENCE [LARGE SCALE GENOMIC DNA]</scope>
    <source>
        <strain>C7 / ATCC BAA-1331</strain>
    </source>
</reference>
<comment type="function">
    <text evidence="1">Involved in the binding of tRNA to the ribosomes.</text>
</comment>
<comment type="subunit">
    <text evidence="1">Part of the 30S ribosomal subunit.</text>
</comment>
<comment type="similarity">
    <text evidence="1">Belongs to the universal ribosomal protein uS10 family.</text>
</comment>
<organism>
    <name type="scientific">Methanococcus maripaludis (strain C7 / ATCC BAA-1331)</name>
    <dbReference type="NCBI Taxonomy" id="426368"/>
    <lineage>
        <taxon>Archaea</taxon>
        <taxon>Methanobacteriati</taxon>
        <taxon>Methanobacteriota</taxon>
        <taxon>Methanomada group</taxon>
        <taxon>Methanococci</taxon>
        <taxon>Methanococcales</taxon>
        <taxon>Methanococcaceae</taxon>
        <taxon>Methanococcus</taxon>
    </lineage>
</organism>
<name>RS10_METM7</name>
<dbReference type="EMBL" id="CP000745">
    <property type="protein sequence ID" value="ABR65683.1"/>
    <property type="molecule type" value="Genomic_DNA"/>
</dbReference>
<dbReference type="SMR" id="A6VGV7"/>
<dbReference type="STRING" id="426368.MmarC7_0616"/>
<dbReference type="KEGG" id="mmz:MmarC7_0616"/>
<dbReference type="eggNOG" id="arCOG01758">
    <property type="taxonomic scope" value="Archaea"/>
</dbReference>
<dbReference type="HOGENOM" id="CLU_122625_0_1_2"/>
<dbReference type="OrthoDB" id="371736at2157"/>
<dbReference type="GO" id="GO:0015935">
    <property type="term" value="C:small ribosomal subunit"/>
    <property type="evidence" value="ECO:0007669"/>
    <property type="project" value="InterPro"/>
</dbReference>
<dbReference type="GO" id="GO:0003735">
    <property type="term" value="F:structural constituent of ribosome"/>
    <property type="evidence" value="ECO:0007669"/>
    <property type="project" value="InterPro"/>
</dbReference>
<dbReference type="GO" id="GO:0000049">
    <property type="term" value="F:tRNA binding"/>
    <property type="evidence" value="ECO:0007669"/>
    <property type="project" value="UniProtKB-UniRule"/>
</dbReference>
<dbReference type="GO" id="GO:0006412">
    <property type="term" value="P:translation"/>
    <property type="evidence" value="ECO:0007669"/>
    <property type="project" value="UniProtKB-UniRule"/>
</dbReference>
<dbReference type="FunFam" id="3.30.70.600:FF:000004">
    <property type="entry name" value="30S ribosomal protein S10"/>
    <property type="match status" value="1"/>
</dbReference>
<dbReference type="Gene3D" id="3.30.70.600">
    <property type="entry name" value="Ribosomal protein S10 domain"/>
    <property type="match status" value="1"/>
</dbReference>
<dbReference type="HAMAP" id="MF_00508">
    <property type="entry name" value="Ribosomal_uS10"/>
    <property type="match status" value="1"/>
</dbReference>
<dbReference type="InterPro" id="IPR001848">
    <property type="entry name" value="Ribosomal_uS10"/>
</dbReference>
<dbReference type="InterPro" id="IPR018268">
    <property type="entry name" value="Ribosomal_uS10_CS"/>
</dbReference>
<dbReference type="InterPro" id="IPR027486">
    <property type="entry name" value="Ribosomal_uS10_dom"/>
</dbReference>
<dbReference type="InterPro" id="IPR036838">
    <property type="entry name" value="Ribosomal_uS10_dom_sf"/>
</dbReference>
<dbReference type="InterPro" id="IPR005729">
    <property type="entry name" value="Ribosomal_uS10_euk/arc"/>
</dbReference>
<dbReference type="NCBIfam" id="TIGR01046">
    <property type="entry name" value="uS10_euk_arch"/>
    <property type="match status" value="1"/>
</dbReference>
<dbReference type="PANTHER" id="PTHR11700">
    <property type="entry name" value="30S RIBOSOMAL PROTEIN S10 FAMILY MEMBER"/>
    <property type="match status" value="1"/>
</dbReference>
<dbReference type="Pfam" id="PF00338">
    <property type="entry name" value="Ribosomal_S10"/>
    <property type="match status" value="1"/>
</dbReference>
<dbReference type="PRINTS" id="PR00971">
    <property type="entry name" value="RIBOSOMALS10"/>
</dbReference>
<dbReference type="SMART" id="SM01403">
    <property type="entry name" value="Ribosomal_S10"/>
    <property type="match status" value="1"/>
</dbReference>
<dbReference type="SUPFAM" id="SSF54999">
    <property type="entry name" value="Ribosomal protein S10"/>
    <property type="match status" value="1"/>
</dbReference>
<dbReference type="PROSITE" id="PS00361">
    <property type="entry name" value="RIBOSOMAL_S10"/>
    <property type="match status" value="1"/>
</dbReference>
<sequence length="102" mass="11529">MQKARIKLSSTQHTELDGVCDQIKAIAEKTGVDMAGPIPLPTKALKVTTRKSTDGEGSSSFDRWTMRVHKRVIDIEADERTMKHIMKVRIPDTVQIEIELRN</sequence>
<proteinExistence type="inferred from homology"/>
<evidence type="ECO:0000255" key="1">
    <source>
        <dbReference type="HAMAP-Rule" id="MF_00508"/>
    </source>
</evidence>
<evidence type="ECO:0000305" key="2"/>